<proteinExistence type="inferred from homology"/>
<feature type="chain" id="PRO_0000075257" description="Alanine--tRNA ligase">
    <location>
        <begin position="1"/>
        <end position="875"/>
    </location>
</feature>
<feature type="binding site" evidence="1">
    <location>
        <position position="564"/>
    </location>
    <ligand>
        <name>Zn(2+)</name>
        <dbReference type="ChEBI" id="CHEBI:29105"/>
    </ligand>
</feature>
<feature type="binding site" evidence="1">
    <location>
        <position position="568"/>
    </location>
    <ligand>
        <name>Zn(2+)</name>
        <dbReference type="ChEBI" id="CHEBI:29105"/>
    </ligand>
</feature>
<feature type="binding site" evidence="1">
    <location>
        <position position="666"/>
    </location>
    <ligand>
        <name>Zn(2+)</name>
        <dbReference type="ChEBI" id="CHEBI:29105"/>
    </ligand>
</feature>
<feature type="binding site" evidence="1">
    <location>
        <position position="670"/>
    </location>
    <ligand>
        <name>Zn(2+)</name>
        <dbReference type="ChEBI" id="CHEBI:29105"/>
    </ligand>
</feature>
<organism>
    <name type="scientific">Yersinia pseudotuberculosis serotype I (strain IP32953)</name>
    <dbReference type="NCBI Taxonomy" id="273123"/>
    <lineage>
        <taxon>Bacteria</taxon>
        <taxon>Pseudomonadati</taxon>
        <taxon>Pseudomonadota</taxon>
        <taxon>Gammaproteobacteria</taxon>
        <taxon>Enterobacterales</taxon>
        <taxon>Yersiniaceae</taxon>
        <taxon>Yersinia</taxon>
    </lineage>
</organism>
<reference key="1">
    <citation type="journal article" date="2004" name="Proc. Natl. Acad. Sci. U.S.A.">
        <title>Insights into the evolution of Yersinia pestis through whole-genome comparison with Yersinia pseudotuberculosis.</title>
        <authorList>
            <person name="Chain P.S.G."/>
            <person name="Carniel E."/>
            <person name="Larimer F.W."/>
            <person name="Lamerdin J."/>
            <person name="Stoutland P.O."/>
            <person name="Regala W.M."/>
            <person name="Georgescu A.M."/>
            <person name="Vergez L.M."/>
            <person name="Land M.L."/>
            <person name="Motin V.L."/>
            <person name="Brubaker R.R."/>
            <person name="Fowler J."/>
            <person name="Hinnebusch J."/>
            <person name="Marceau M."/>
            <person name="Medigue C."/>
            <person name="Simonet M."/>
            <person name="Chenal-Francisque V."/>
            <person name="Souza B."/>
            <person name="Dacheux D."/>
            <person name="Elliott J.M."/>
            <person name="Derbise A."/>
            <person name="Hauser L.J."/>
            <person name="Garcia E."/>
        </authorList>
    </citation>
    <scope>NUCLEOTIDE SEQUENCE [LARGE SCALE GENOMIC DNA]</scope>
    <source>
        <strain>IP32953</strain>
    </source>
</reference>
<comment type="function">
    <text evidence="1">Catalyzes the attachment of alanine to tRNA(Ala) in a two-step reaction: alanine is first activated by ATP to form Ala-AMP and then transferred to the acceptor end of tRNA(Ala). Also edits incorrectly charged Ser-tRNA(Ala) and Gly-tRNA(Ala) via its editing domain.</text>
</comment>
<comment type="catalytic activity">
    <reaction evidence="1">
        <text>tRNA(Ala) + L-alanine + ATP = L-alanyl-tRNA(Ala) + AMP + diphosphate</text>
        <dbReference type="Rhea" id="RHEA:12540"/>
        <dbReference type="Rhea" id="RHEA-COMP:9657"/>
        <dbReference type="Rhea" id="RHEA-COMP:9923"/>
        <dbReference type="ChEBI" id="CHEBI:30616"/>
        <dbReference type="ChEBI" id="CHEBI:33019"/>
        <dbReference type="ChEBI" id="CHEBI:57972"/>
        <dbReference type="ChEBI" id="CHEBI:78442"/>
        <dbReference type="ChEBI" id="CHEBI:78497"/>
        <dbReference type="ChEBI" id="CHEBI:456215"/>
        <dbReference type="EC" id="6.1.1.7"/>
    </reaction>
</comment>
<comment type="cofactor">
    <cofactor evidence="1">
        <name>Zn(2+)</name>
        <dbReference type="ChEBI" id="CHEBI:29105"/>
    </cofactor>
    <text evidence="1">Binds 1 zinc ion per subunit.</text>
</comment>
<comment type="subunit">
    <text evidence="1">Homotetramer.</text>
</comment>
<comment type="subcellular location">
    <subcellularLocation>
        <location evidence="1">Cytoplasm</location>
    </subcellularLocation>
</comment>
<comment type="domain">
    <text evidence="1">Consists of three domains; the N-terminal catalytic domain, the editing domain and the C-terminal C-Ala domain. The editing domain removes incorrectly charged amino acids, while the C-Ala domain, along with tRNA(Ala), serves as a bridge to cooperatively bring together the editing and aminoacylation centers thus stimulating deacylation of misacylated tRNAs.</text>
</comment>
<comment type="similarity">
    <text evidence="1">Belongs to the class-II aminoacyl-tRNA synthetase family.</text>
</comment>
<evidence type="ECO:0000255" key="1">
    <source>
        <dbReference type="HAMAP-Rule" id="MF_00036"/>
    </source>
</evidence>
<sequence>MSKSTAEIRQAFLDFFHSKGHQVVSSSSLVPNNDPTLLFTNAGMNQFKDVFLGLDKRAYSRATTSQRCVRAGGKHNDLENVGYTARHHTFFEMLGNFSFGDYFKHDAINFAWELLTSEQWFNLPKEKLWVTVYETDDEAYNIWANEVGVPHERIIRIGDNKGGAFASDNFWQMGDTGPCGPCSEIFFDHGDHIWGGPPGSAEEDGDRYIEIWNIVFMQFNRQSDGTMLPLPKPSVDTGMGLERIAAVLQHVNSNYEIDLFRDLIAAVADVTGATDLSSKSLRVIADHIRSCAFLISDGVIPSNENRGYVLRRIIRRAIRHGNMLGAKETFFYKLVAPLIAVMGPAAAELKQQQAMVEQVLKTEEEQFARTLERGLALLDDELSKLTGDTLDGETAFRLYDTYGFPVDLTADVCRERNLKVDEAGFEQAMEAQRRRARESSGFGADYNSLIRVDSASQFSGYDHVQQHATVTALFRNGEAVDEIHAGEEAVVVLNRTPFYGESGGQVGDKGELKNATATFSVTDTQKYGQAIGHVGILTTGTLRVNHSVEALVDVVRRNRIRLNHSATHLLHAALRNVLGEHVAQKGSLVNDKYLRFDFSHFEAMKPEQIRLVEDLVNEQIRRNMPVQTEVMELDAAKEKGAMALFGEKYDDQVRVLTMGDFSTELCGGTHASRTGDIGLFRILTESGTAAGIRRIEAVTGEGAIALLHQQSDLLQDVAHLVKGDIHNLADKVRAVLDRSKMLERELQQLKDQQAAQESASLSSSAKLINGVKLLVSQLDNVEPKMLRTMVDDLKNQLGSAIIVLATTADDKVSLIVGVTKDLTGKVKAGELIADIAQQVGGKGGGRPDMAQAGGTDVQALPAALASVEAWVASRM</sequence>
<accession>Q66E68</accession>
<keyword id="KW-0030">Aminoacyl-tRNA synthetase</keyword>
<keyword id="KW-0067">ATP-binding</keyword>
<keyword id="KW-0963">Cytoplasm</keyword>
<keyword id="KW-0436">Ligase</keyword>
<keyword id="KW-0479">Metal-binding</keyword>
<keyword id="KW-0547">Nucleotide-binding</keyword>
<keyword id="KW-0648">Protein biosynthesis</keyword>
<keyword id="KW-0694">RNA-binding</keyword>
<keyword id="KW-0820">tRNA-binding</keyword>
<keyword id="KW-0862">Zinc</keyword>
<protein>
    <recommendedName>
        <fullName evidence="1">Alanine--tRNA ligase</fullName>
        <ecNumber evidence="1">6.1.1.7</ecNumber>
    </recommendedName>
    <alternativeName>
        <fullName evidence="1">Alanyl-tRNA synthetase</fullName>
        <shortName evidence="1">AlaRS</shortName>
    </alternativeName>
</protein>
<dbReference type="EC" id="6.1.1.7" evidence="1"/>
<dbReference type="EMBL" id="BX936398">
    <property type="protein sequence ID" value="CAH20065.1"/>
    <property type="molecule type" value="Genomic_DNA"/>
</dbReference>
<dbReference type="RefSeq" id="WP_011191808.1">
    <property type="nucleotide sequence ID" value="NC_006155.1"/>
</dbReference>
<dbReference type="SMR" id="Q66E68"/>
<dbReference type="GeneID" id="49787166"/>
<dbReference type="KEGG" id="ypo:BZ17_1731"/>
<dbReference type="KEGG" id="yps:YPTB0825"/>
<dbReference type="PATRIC" id="fig|273123.14.peg.1832"/>
<dbReference type="Proteomes" id="UP000001011">
    <property type="component" value="Chromosome"/>
</dbReference>
<dbReference type="GO" id="GO:0005829">
    <property type="term" value="C:cytosol"/>
    <property type="evidence" value="ECO:0007669"/>
    <property type="project" value="TreeGrafter"/>
</dbReference>
<dbReference type="GO" id="GO:0004813">
    <property type="term" value="F:alanine-tRNA ligase activity"/>
    <property type="evidence" value="ECO:0007669"/>
    <property type="project" value="UniProtKB-UniRule"/>
</dbReference>
<dbReference type="GO" id="GO:0002161">
    <property type="term" value="F:aminoacyl-tRNA deacylase activity"/>
    <property type="evidence" value="ECO:0007669"/>
    <property type="project" value="TreeGrafter"/>
</dbReference>
<dbReference type="GO" id="GO:0005524">
    <property type="term" value="F:ATP binding"/>
    <property type="evidence" value="ECO:0007669"/>
    <property type="project" value="UniProtKB-UniRule"/>
</dbReference>
<dbReference type="GO" id="GO:0000049">
    <property type="term" value="F:tRNA binding"/>
    <property type="evidence" value="ECO:0007669"/>
    <property type="project" value="UniProtKB-KW"/>
</dbReference>
<dbReference type="GO" id="GO:0008270">
    <property type="term" value="F:zinc ion binding"/>
    <property type="evidence" value="ECO:0007669"/>
    <property type="project" value="UniProtKB-UniRule"/>
</dbReference>
<dbReference type="GO" id="GO:0006419">
    <property type="term" value="P:alanyl-tRNA aminoacylation"/>
    <property type="evidence" value="ECO:0007669"/>
    <property type="project" value="UniProtKB-UniRule"/>
</dbReference>
<dbReference type="GO" id="GO:0045892">
    <property type="term" value="P:negative regulation of DNA-templated transcription"/>
    <property type="evidence" value="ECO:0007669"/>
    <property type="project" value="TreeGrafter"/>
</dbReference>
<dbReference type="CDD" id="cd00673">
    <property type="entry name" value="AlaRS_core"/>
    <property type="match status" value="1"/>
</dbReference>
<dbReference type="FunFam" id="2.40.30.130:FF:000001">
    <property type="entry name" value="Alanine--tRNA ligase"/>
    <property type="match status" value="1"/>
</dbReference>
<dbReference type="FunFam" id="3.10.310.40:FF:000001">
    <property type="entry name" value="Alanine--tRNA ligase"/>
    <property type="match status" value="1"/>
</dbReference>
<dbReference type="FunFam" id="3.30.54.20:FF:000001">
    <property type="entry name" value="Alanine--tRNA ligase"/>
    <property type="match status" value="1"/>
</dbReference>
<dbReference type="FunFam" id="3.30.930.10:FF:000004">
    <property type="entry name" value="Alanine--tRNA ligase"/>
    <property type="match status" value="1"/>
</dbReference>
<dbReference type="FunFam" id="3.30.980.10:FF:000004">
    <property type="entry name" value="Alanine--tRNA ligase, cytoplasmic"/>
    <property type="match status" value="1"/>
</dbReference>
<dbReference type="Gene3D" id="2.40.30.130">
    <property type="match status" value="1"/>
</dbReference>
<dbReference type="Gene3D" id="3.10.310.40">
    <property type="match status" value="1"/>
</dbReference>
<dbReference type="Gene3D" id="3.30.54.20">
    <property type="match status" value="1"/>
</dbReference>
<dbReference type="Gene3D" id="6.10.250.550">
    <property type="match status" value="1"/>
</dbReference>
<dbReference type="Gene3D" id="3.30.930.10">
    <property type="entry name" value="Bira Bifunctional Protein, Domain 2"/>
    <property type="match status" value="1"/>
</dbReference>
<dbReference type="Gene3D" id="3.30.980.10">
    <property type="entry name" value="Threonyl-trna Synthetase, Chain A, domain 2"/>
    <property type="match status" value="1"/>
</dbReference>
<dbReference type="HAMAP" id="MF_00036_B">
    <property type="entry name" value="Ala_tRNA_synth_B"/>
    <property type="match status" value="1"/>
</dbReference>
<dbReference type="InterPro" id="IPR045864">
    <property type="entry name" value="aa-tRNA-synth_II/BPL/LPL"/>
</dbReference>
<dbReference type="InterPro" id="IPR002318">
    <property type="entry name" value="Ala-tRNA-lgiase_IIc"/>
</dbReference>
<dbReference type="InterPro" id="IPR018162">
    <property type="entry name" value="Ala-tRNA-ligase_IIc_anticod-bd"/>
</dbReference>
<dbReference type="InterPro" id="IPR018165">
    <property type="entry name" value="Ala-tRNA-synth_IIc_core"/>
</dbReference>
<dbReference type="InterPro" id="IPR018164">
    <property type="entry name" value="Ala-tRNA-synth_IIc_N"/>
</dbReference>
<dbReference type="InterPro" id="IPR050058">
    <property type="entry name" value="Ala-tRNA_ligase"/>
</dbReference>
<dbReference type="InterPro" id="IPR023033">
    <property type="entry name" value="Ala_tRNA_ligase_euk/bac"/>
</dbReference>
<dbReference type="InterPro" id="IPR003156">
    <property type="entry name" value="DHHA1_dom"/>
</dbReference>
<dbReference type="InterPro" id="IPR018163">
    <property type="entry name" value="Thr/Ala-tRNA-synth_IIc_edit"/>
</dbReference>
<dbReference type="InterPro" id="IPR009000">
    <property type="entry name" value="Transl_B-barrel_sf"/>
</dbReference>
<dbReference type="InterPro" id="IPR012947">
    <property type="entry name" value="tRNA_SAD"/>
</dbReference>
<dbReference type="NCBIfam" id="TIGR00344">
    <property type="entry name" value="alaS"/>
    <property type="match status" value="1"/>
</dbReference>
<dbReference type="PANTHER" id="PTHR11777:SF9">
    <property type="entry name" value="ALANINE--TRNA LIGASE, CYTOPLASMIC"/>
    <property type="match status" value="1"/>
</dbReference>
<dbReference type="PANTHER" id="PTHR11777">
    <property type="entry name" value="ALANYL-TRNA SYNTHETASE"/>
    <property type="match status" value="1"/>
</dbReference>
<dbReference type="Pfam" id="PF02272">
    <property type="entry name" value="DHHA1"/>
    <property type="match status" value="1"/>
</dbReference>
<dbReference type="Pfam" id="PF01411">
    <property type="entry name" value="tRNA-synt_2c"/>
    <property type="match status" value="1"/>
</dbReference>
<dbReference type="Pfam" id="PF07973">
    <property type="entry name" value="tRNA_SAD"/>
    <property type="match status" value="1"/>
</dbReference>
<dbReference type="PRINTS" id="PR00980">
    <property type="entry name" value="TRNASYNTHALA"/>
</dbReference>
<dbReference type="SMART" id="SM00863">
    <property type="entry name" value="tRNA_SAD"/>
    <property type="match status" value="1"/>
</dbReference>
<dbReference type="SUPFAM" id="SSF55681">
    <property type="entry name" value="Class II aaRS and biotin synthetases"/>
    <property type="match status" value="1"/>
</dbReference>
<dbReference type="SUPFAM" id="SSF101353">
    <property type="entry name" value="Putative anticodon-binding domain of alanyl-tRNA synthetase (AlaRS)"/>
    <property type="match status" value="1"/>
</dbReference>
<dbReference type="SUPFAM" id="SSF55186">
    <property type="entry name" value="ThrRS/AlaRS common domain"/>
    <property type="match status" value="1"/>
</dbReference>
<dbReference type="SUPFAM" id="SSF50447">
    <property type="entry name" value="Translation proteins"/>
    <property type="match status" value="1"/>
</dbReference>
<dbReference type="PROSITE" id="PS50860">
    <property type="entry name" value="AA_TRNA_LIGASE_II_ALA"/>
    <property type="match status" value="1"/>
</dbReference>
<gene>
    <name evidence="1" type="primary">alaS</name>
    <name type="ordered locus">YPTB0825</name>
</gene>
<name>SYA_YERPS</name>